<dbReference type="EMBL" id="CP000747">
    <property type="protein sequence ID" value="ACG77656.1"/>
    <property type="molecule type" value="Genomic_DNA"/>
</dbReference>
<dbReference type="RefSeq" id="WP_012521800.1">
    <property type="nucleotide sequence ID" value="NC_011144.1"/>
</dbReference>
<dbReference type="SMR" id="B4R8M9"/>
<dbReference type="STRING" id="450851.PHZ_c1242"/>
<dbReference type="KEGG" id="pzu:PHZ_c1242"/>
<dbReference type="eggNOG" id="COG0094">
    <property type="taxonomic scope" value="Bacteria"/>
</dbReference>
<dbReference type="HOGENOM" id="CLU_061015_2_1_5"/>
<dbReference type="OrthoDB" id="9806626at2"/>
<dbReference type="Proteomes" id="UP000001868">
    <property type="component" value="Chromosome"/>
</dbReference>
<dbReference type="GO" id="GO:1990904">
    <property type="term" value="C:ribonucleoprotein complex"/>
    <property type="evidence" value="ECO:0007669"/>
    <property type="project" value="UniProtKB-KW"/>
</dbReference>
<dbReference type="GO" id="GO:0005840">
    <property type="term" value="C:ribosome"/>
    <property type="evidence" value="ECO:0007669"/>
    <property type="project" value="UniProtKB-KW"/>
</dbReference>
<dbReference type="GO" id="GO:0019843">
    <property type="term" value="F:rRNA binding"/>
    <property type="evidence" value="ECO:0007669"/>
    <property type="project" value="UniProtKB-UniRule"/>
</dbReference>
<dbReference type="GO" id="GO:0003735">
    <property type="term" value="F:structural constituent of ribosome"/>
    <property type="evidence" value="ECO:0007669"/>
    <property type="project" value="InterPro"/>
</dbReference>
<dbReference type="GO" id="GO:0000049">
    <property type="term" value="F:tRNA binding"/>
    <property type="evidence" value="ECO:0007669"/>
    <property type="project" value="UniProtKB-UniRule"/>
</dbReference>
<dbReference type="GO" id="GO:0006412">
    <property type="term" value="P:translation"/>
    <property type="evidence" value="ECO:0007669"/>
    <property type="project" value="UniProtKB-UniRule"/>
</dbReference>
<dbReference type="FunFam" id="3.30.1440.10:FF:000001">
    <property type="entry name" value="50S ribosomal protein L5"/>
    <property type="match status" value="1"/>
</dbReference>
<dbReference type="Gene3D" id="3.30.1440.10">
    <property type="match status" value="1"/>
</dbReference>
<dbReference type="HAMAP" id="MF_01333_B">
    <property type="entry name" value="Ribosomal_uL5_B"/>
    <property type="match status" value="1"/>
</dbReference>
<dbReference type="InterPro" id="IPR002132">
    <property type="entry name" value="Ribosomal_uL5"/>
</dbReference>
<dbReference type="InterPro" id="IPR020930">
    <property type="entry name" value="Ribosomal_uL5_bac-type"/>
</dbReference>
<dbReference type="InterPro" id="IPR031309">
    <property type="entry name" value="Ribosomal_uL5_C"/>
</dbReference>
<dbReference type="InterPro" id="IPR020929">
    <property type="entry name" value="Ribosomal_uL5_CS"/>
</dbReference>
<dbReference type="InterPro" id="IPR022803">
    <property type="entry name" value="Ribosomal_uL5_dom_sf"/>
</dbReference>
<dbReference type="InterPro" id="IPR031310">
    <property type="entry name" value="Ribosomal_uL5_N"/>
</dbReference>
<dbReference type="NCBIfam" id="NF000585">
    <property type="entry name" value="PRK00010.1"/>
    <property type="match status" value="1"/>
</dbReference>
<dbReference type="PANTHER" id="PTHR11994">
    <property type="entry name" value="60S RIBOSOMAL PROTEIN L11-RELATED"/>
    <property type="match status" value="1"/>
</dbReference>
<dbReference type="Pfam" id="PF00281">
    <property type="entry name" value="Ribosomal_L5"/>
    <property type="match status" value="1"/>
</dbReference>
<dbReference type="Pfam" id="PF00673">
    <property type="entry name" value="Ribosomal_L5_C"/>
    <property type="match status" value="1"/>
</dbReference>
<dbReference type="PIRSF" id="PIRSF002161">
    <property type="entry name" value="Ribosomal_L5"/>
    <property type="match status" value="1"/>
</dbReference>
<dbReference type="SUPFAM" id="SSF55282">
    <property type="entry name" value="RL5-like"/>
    <property type="match status" value="1"/>
</dbReference>
<dbReference type="PROSITE" id="PS00358">
    <property type="entry name" value="RIBOSOMAL_L5"/>
    <property type="match status" value="1"/>
</dbReference>
<feature type="chain" id="PRO_1000142429" description="Large ribosomal subunit protein uL5">
    <location>
        <begin position="1"/>
        <end position="186"/>
    </location>
</feature>
<accession>B4R8M9</accession>
<sequence>MADQAYEPRLKTEYRERIRKSLKDRFGYSNEMQIPKLEKIVINMGVGEAVADSKKIQSAMADLAKIAGQKPVSTKARTSIAGFKLREGMTVGCKVTLRKDRMYEFLDRLITIALPRVKDFRGLKPTSFDGRGNYAMGLKEHIVFPEINYDQIDQIWGMDIIVTTTAKTDDEARELLKEFQFPFVQQ</sequence>
<evidence type="ECO:0000255" key="1">
    <source>
        <dbReference type="HAMAP-Rule" id="MF_01333"/>
    </source>
</evidence>
<evidence type="ECO:0000305" key="2"/>
<keyword id="KW-1185">Reference proteome</keyword>
<keyword id="KW-0687">Ribonucleoprotein</keyword>
<keyword id="KW-0689">Ribosomal protein</keyword>
<keyword id="KW-0694">RNA-binding</keyword>
<keyword id="KW-0699">rRNA-binding</keyword>
<keyword id="KW-0820">tRNA-binding</keyword>
<gene>
    <name evidence="1" type="primary">rplE</name>
    <name type="ordered locus">PHZ_c1242</name>
</gene>
<proteinExistence type="inferred from homology"/>
<name>RL5_PHEZH</name>
<organism>
    <name type="scientific">Phenylobacterium zucineum (strain HLK1)</name>
    <dbReference type="NCBI Taxonomy" id="450851"/>
    <lineage>
        <taxon>Bacteria</taxon>
        <taxon>Pseudomonadati</taxon>
        <taxon>Pseudomonadota</taxon>
        <taxon>Alphaproteobacteria</taxon>
        <taxon>Caulobacterales</taxon>
        <taxon>Caulobacteraceae</taxon>
        <taxon>Phenylobacterium</taxon>
    </lineage>
</organism>
<protein>
    <recommendedName>
        <fullName evidence="1">Large ribosomal subunit protein uL5</fullName>
    </recommendedName>
    <alternativeName>
        <fullName evidence="2">50S ribosomal protein L5</fullName>
    </alternativeName>
</protein>
<comment type="function">
    <text evidence="1">This is one of the proteins that bind and probably mediate the attachment of the 5S RNA into the large ribosomal subunit, where it forms part of the central protuberance. In the 70S ribosome it contacts protein S13 of the 30S subunit (bridge B1b), connecting the 2 subunits; this bridge is implicated in subunit movement. Contacts the P site tRNA; the 5S rRNA and some of its associated proteins might help stabilize positioning of ribosome-bound tRNAs.</text>
</comment>
<comment type="subunit">
    <text evidence="1">Part of the 50S ribosomal subunit; part of the 5S rRNA/L5/L18/L25 subcomplex. Contacts the 5S rRNA and the P site tRNA. Forms a bridge to the 30S subunit in the 70S ribosome.</text>
</comment>
<comment type="similarity">
    <text evidence="1">Belongs to the universal ribosomal protein uL5 family.</text>
</comment>
<reference key="1">
    <citation type="journal article" date="2008" name="BMC Genomics">
        <title>Complete genome of Phenylobacterium zucineum - a novel facultative intracellular bacterium isolated from human erythroleukemia cell line K562.</title>
        <authorList>
            <person name="Luo Y."/>
            <person name="Xu X."/>
            <person name="Ding Z."/>
            <person name="Liu Z."/>
            <person name="Zhang B."/>
            <person name="Yan Z."/>
            <person name="Sun J."/>
            <person name="Hu S."/>
            <person name="Hu X."/>
        </authorList>
    </citation>
    <scope>NUCLEOTIDE SEQUENCE [LARGE SCALE GENOMIC DNA]</scope>
    <source>
        <strain>HLK1</strain>
    </source>
</reference>